<protein>
    <recommendedName>
        <fullName evidence="1">Ribosomal RNA small subunit methyltransferase G</fullName>
        <ecNumber evidence="1">2.1.1.-</ecNumber>
    </recommendedName>
    <alternativeName>
        <fullName evidence="1">16S rRNA 7-methylguanosine methyltransferase</fullName>
        <shortName evidence="1">16S rRNA m7G methyltransferase</shortName>
    </alternativeName>
</protein>
<name>RSMG_PARD8</name>
<keyword id="KW-0963">Cytoplasm</keyword>
<keyword id="KW-0489">Methyltransferase</keyword>
<keyword id="KW-1185">Reference proteome</keyword>
<keyword id="KW-0698">rRNA processing</keyword>
<keyword id="KW-0949">S-adenosyl-L-methionine</keyword>
<keyword id="KW-0808">Transferase</keyword>
<reference key="1">
    <citation type="journal article" date="2007" name="PLoS Biol.">
        <title>Evolution of symbiotic bacteria in the distal human intestine.</title>
        <authorList>
            <person name="Xu J."/>
            <person name="Mahowald M.A."/>
            <person name="Ley R.E."/>
            <person name="Lozupone C.A."/>
            <person name="Hamady M."/>
            <person name="Martens E.C."/>
            <person name="Henrissat B."/>
            <person name="Coutinho P.M."/>
            <person name="Minx P."/>
            <person name="Latreille P."/>
            <person name="Cordum H."/>
            <person name="Van Brunt A."/>
            <person name="Kim K."/>
            <person name="Fulton R.S."/>
            <person name="Fulton L.A."/>
            <person name="Clifton S.W."/>
            <person name="Wilson R.K."/>
            <person name="Knight R.D."/>
            <person name="Gordon J.I."/>
        </authorList>
    </citation>
    <scope>NUCLEOTIDE SEQUENCE [LARGE SCALE GENOMIC DNA]</scope>
    <source>
        <strain>ATCC 8503 / DSM 20701 / CIP 104284 / JCM 5825 / NCTC 11152</strain>
    </source>
</reference>
<accession>A6L982</accession>
<dbReference type="EC" id="2.1.1.-" evidence="1"/>
<dbReference type="EMBL" id="CP000140">
    <property type="protein sequence ID" value="ABR42246.1"/>
    <property type="molecule type" value="Genomic_DNA"/>
</dbReference>
<dbReference type="SMR" id="A6L982"/>
<dbReference type="STRING" id="435591.BDI_0469"/>
<dbReference type="PaxDb" id="435591-BDI_0469"/>
<dbReference type="KEGG" id="pdi:BDI_0469"/>
<dbReference type="eggNOG" id="COG0357">
    <property type="taxonomic scope" value="Bacteria"/>
</dbReference>
<dbReference type="HOGENOM" id="CLU_065341_2_2_10"/>
<dbReference type="Proteomes" id="UP000000566">
    <property type="component" value="Chromosome"/>
</dbReference>
<dbReference type="GO" id="GO:0005829">
    <property type="term" value="C:cytosol"/>
    <property type="evidence" value="ECO:0007669"/>
    <property type="project" value="TreeGrafter"/>
</dbReference>
<dbReference type="GO" id="GO:0070043">
    <property type="term" value="F:rRNA (guanine-N7-)-methyltransferase activity"/>
    <property type="evidence" value="ECO:0007669"/>
    <property type="project" value="UniProtKB-UniRule"/>
</dbReference>
<dbReference type="CDD" id="cd02440">
    <property type="entry name" value="AdoMet_MTases"/>
    <property type="match status" value="1"/>
</dbReference>
<dbReference type="FunFam" id="3.40.50.150:FF:000429">
    <property type="entry name" value="Ribosomal RNA small subunit methyltransferase G"/>
    <property type="match status" value="1"/>
</dbReference>
<dbReference type="Gene3D" id="3.40.50.150">
    <property type="entry name" value="Vaccinia Virus protein VP39"/>
    <property type="match status" value="1"/>
</dbReference>
<dbReference type="HAMAP" id="MF_00074">
    <property type="entry name" value="16SrRNA_methyltr_G"/>
    <property type="match status" value="1"/>
</dbReference>
<dbReference type="InterPro" id="IPR003682">
    <property type="entry name" value="rRNA_ssu_MeTfrase_G"/>
</dbReference>
<dbReference type="InterPro" id="IPR029063">
    <property type="entry name" value="SAM-dependent_MTases_sf"/>
</dbReference>
<dbReference type="NCBIfam" id="TIGR00138">
    <property type="entry name" value="rsmG_gidB"/>
    <property type="match status" value="1"/>
</dbReference>
<dbReference type="PANTHER" id="PTHR31760">
    <property type="entry name" value="S-ADENOSYL-L-METHIONINE-DEPENDENT METHYLTRANSFERASES SUPERFAMILY PROTEIN"/>
    <property type="match status" value="1"/>
</dbReference>
<dbReference type="PANTHER" id="PTHR31760:SF0">
    <property type="entry name" value="S-ADENOSYL-L-METHIONINE-DEPENDENT METHYLTRANSFERASES SUPERFAMILY PROTEIN"/>
    <property type="match status" value="1"/>
</dbReference>
<dbReference type="Pfam" id="PF02527">
    <property type="entry name" value="GidB"/>
    <property type="match status" value="1"/>
</dbReference>
<dbReference type="PIRSF" id="PIRSF003078">
    <property type="entry name" value="GidB"/>
    <property type="match status" value="1"/>
</dbReference>
<dbReference type="SUPFAM" id="SSF53335">
    <property type="entry name" value="S-adenosyl-L-methionine-dependent methyltransferases"/>
    <property type="match status" value="1"/>
</dbReference>
<proteinExistence type="inferred from homology"/>
<evidence type="ECO:0000255" key="1">
    <source>
        <dbReference type="HAMAP-Rule" id="MF_00074"/>
    </source>
</evidence>
<gene>
    <name evidence="1" type="primary">rsmG</name>
    <name type="ordered locus">BDI_0469</name>
</gene>
<organism>
    <name type="scientific">Parabacteroides distasonis (strain ATCC 8503 / DSM 20701 / CIP 104284 / JCM 5825 / NCTC 11152)</name>
    <dbReference type="NCBI Taxonomy" id="435591"/>
    <lineage>
        <taxon>Bacteria</taxon>
        <taxon>Pseudomonadati</taxon>
        <taxon>Bacteroidota</taxon>
        <taxon>Bacteroidia</taxon>
        <taxon>Bacteroidales</taxon>
        <taxon>Tannerellaceae</taxon>
        <taxon>Parabacteroides</taxon>
    </lineage>
</organism>
<comment type="function">
    <text evidence="1">Specifically methylates the N7 position of a guanine in 16S rRNA.</text>
</comment>
<comment type="subcellular location">
    <subcellularLocation>
        <location evidence="1">Cytoplasm</location>
    </subcellularLocation>
</comment>
<comment type="similarity">
    <text evidence="1">Belongs to the methyltransferase superfamily. RNA methyltransferase RsmG family.</text>
</comment>
<sequence length="230" mass="26128">MIDKPINRCPMEQNTEKFSIPNSQFSILTSYFPDLTDRQKEQYAALYDLYTDWNAKINVISRKDIENLYPHHVLHSLGITDMLRFKPGSSVMDLGTGGGFPGIPLAILFPETHFHLVDSIGKKIKVGQAVAEAIGLENVSFRHCRGEEEKQLFDFVVSRAVMPLADLVKIVRKNIKKEQINALPNGLICLKGGELAHEILPFRNQAISMDLKDHFKEEFFETKKVVYVPL</sequence>
<feature type="chain" id="PRO_0000335389" description="Ribosomal RNA small subunit methyltransferase G">
    <location>
        <begin position="1"/>
        <end position="230"/>
    </location>
</feature>
<feature type="binding site" evidence="1">
    <location>
        <position position="95"/>
    </location>
    <ligand>
        <name>S-adenosyl-L-methionine</name>
        <dbReference type="ChEBI" id="CHEBI:59789"/>
    </ligand>
</feature>
<feature type="binding site" evidence="1">
    <location>
        <position position="100"/>
    </location>
    <ligand>
        <name>S-adenosyl-L-methionine</name>
        <dbReference type="ChEBI" id="CHEBI:59789"/>
    </ligand>
</feature>
<feature type="binding site" evidence="1">
    <location>
        <begin position="146"/>
        <end position="147"/>
    </location>
    <ligand>
        <name>S-adenosyl-L-methionine</name>
        <dbReference type="ChEBI" id="CHEBI:59789"/>
    </ligand>
</feature>
<feature type="binding site" evidence="1">
    <location>
        <position position="159"/>
    </location>
    <ligand>
        <name>S-adenosyl-L-methionine</name>
        <dbReference type="ChEBI" id="CHEBI:59789"/>
    </ligand>
</feature>